<dbReference type="EMBL" id="AL096860">
    <property type="protein sequence ID" value="CAB51216.1"/>
    <property type="molecule type" value="Genomic_DNA"/>
</dbReference>
<dbReference type="EMBL" id="CP002686">
    <property type="protein sequence ID" value="AEE78281.1"/>
    <property type="molecule type" value="Genomic_DNA"/>
</dbReference>
<dbReference type="EMBL" id="BX826124">
    <property type="status" value="NOT_ANNOTATED_CDS"/>
    <property type="molecule type" value="mRNA"/>
</dbReference>
<dbReference type="PIR" id="T12999">
    <property type="entry name" value="T12999"/>
</dbReference>
<dbReference type="SMR" id="Q9STX9"/>
<dbReference type="BioGRID" id="9218">
    <property type="interactions" value="1"/>
</dbReference>
<dbReference type="FunCoup" id="Q9STX9">
    <property type="interactions" value="427"/>
</dbReference>
<dbReference type="IntAct" id="Q9STX9">
    <property type="interactions" value="1"/>
</dbReference>
<dbReference type="STRING" id="3702.Q9STX9"/>
<dbReference type="TCDB" id="1.A.8.10.7">
    <property type="family name" value="the major intrinsic protein (mip) family"/>
</dbReference>
<dbReference type="PaxDb" id="3702-AT3G47440.1"/>
<dbReference type="ProteomicsDB" id="246445"/>
<dbReference type="EnsemblPlants" id="AT3G47440.1">
    <property type="protein sequence ID" value="AT3G47440.1"/>
    <property type="gene ID" value="AT3G47440"/>
</dbReference>
<dbReference type="Gramene" id="AT3G47440.1">
    <property type="protein sequence ID" value="AT3G47440.1"/>
    <property type="gene ID" value="AT3G47440"/>
</dbReference>
<dbReference type="KEGG" id="ath:AT3G47440"/>
<dbReference type="Araport" id="AT3G47440"/>
<dbReference type="TAIR" id="AT3G47440">
    <property type="gene designation" value="TIP5"/>
</dbReference>
<dbReference type="eggNOG" id="KOG0223">
    <property type="taxonomic scope" value="Eukaryota"/>
</dbReference>
<dbReference type="HOGENOM" id="CLU_020019_3_4_1"/>
<dbReference type="InParanoid" id="Q9STX9"/>
<dbReference type="OMA" id="VPTAMFY"/>
<dbReference type="OrthoDB" id="3222at2759"/>
<dbReference type="PhylomeDB" id="Q9STX9"/>
<dbReference type="PRO" id="PR:Q9STX9"/>
<dbReference type="Proteomes" id="UP000006548">
    <property type="component" value="Chromosome 3"/>
</dbReference>
<dbReference type="ExpressionAtlas" id="Q9STX9">
    <property type="expression patterns" value="baseline and differential"/>
</dbReference>
<dbReference type="GO" id="GO:0016020">
    <property type="term" value="C:membrane"/>
    <property type="evidence" value="ECO:0007669"/>
    <property type="project" value="UniProtKB-SubCell"/>
</dbReference>
<dbReference type="GO" id="GO:0005739">
    <property type="term" value="C:mitochondrion"/>
    <property type="evidence" value="ECO:0000314"/>
    <property type="project" value="TAIR"/>
</dbReference>
<dbReference type="GO" id="GO:0090406">
    <property type="term" value="C:pollen tube"/>
    <property type="evidence" value="ECO:0000314"/>
    <property type="project" value="TAIR"/>
</dbReference>
<dbReference type="GO" id="GO:0015204">
    <property type="term" value="F:urea transmembrane transporter activity"/>
    <property type="evidence" value="ECO:0000314"/>
    <property type="project" value="TAIR"/>
</dbReference>
<dbReference type="GO" id="GO:0015250">
    <property type="term" value="F:water channel activity"/>
    <property type="evidence" value="ECO:0000314"/>
    <property type="project" value="TAIR"/>
</dbReference>
<dbReference type="GO" id="GO:0048235">
    <property type="term" value="P:pollen sperm cell differentiation"/>
    <property type="evidence" value="ECO:0000270"/>
    <property type="project" value="TAIR"/>
</dbReference>
<dbReference type="GO" id="GO:0015840">
    <property type="term" value="P:urea transport"/>
    <property type="evidence" value="ECO:0000314"/>
    <property type="project" value="TAIR"/>
</dbReference>
<dbReference type="FunFam" id="1.20.1080.10:FF:000017">
    <property type="entry name" value="Probable aquaporin TIP5-1"/>
    <property type="match status" value="1"/>
</dbReference>
<dbReference type="Gene3D" id="1.20.1080.10">
    <property type="entry name" value="Glycerol uptake facilitator protein"/>
    <property type="match status" value="1"/>
</dbReference>
<dbReference type="InterPro" id="IPR023271">
    <property type="entry name" value="Aquaporin-like"/>
</dbReference>
<dbReference type="InterPro" id="IPR034294">
    <property type="entry name" value="Aquaporin_transptr"/>
</dbReference>
<dbReference type="InterPro" id="IPR000425">
    <property type="entry name" value="MIP"/>
</dbReference>
<dbReference type="InterPro" id="IPR022357">
    <property type="entry name" value="MIP_CS"/>
</dbReference>
<dbReference type="PANTHER" id="PTHR45665:SF27">
    <property type="entry name" value="AQUAPORIN TIP5-1-RELATED"/>
    <property type="match status" value="1"/>
</dbReference>
<dbReference type="PANTHER" id="PTHR45665">
    <property type="entry name" value="AQUAPORIN-8"/>
    <property type="match status" value="1"/>
</dbReference>
<dbReference type="Pfam" id="PF00230">
    <property type="entry name" value="MIP"/>
    <property type="match status" value="1"/>
</dbReference>
<dbReference type="PRINTS" id="PR00783">
    <property type="entry name" value="MINTRINSICP"/>
</dbReference>
<dbReference type="SUPFAM" id="SSF81338">
    <property type="entry name" value="Aquaporin-like"/>
    <property type="match status" value="1"/>
</dbReference>
<dbReference type="PROSITE" id="PS00221">
    <property type="entry name" value="MIP"/>
    <property type="match status" value="1"/>
</dbReference>
<evidence type="ECO:0000250" key="1"/>
<evidence type="ECO:0000250" key="2">
    <source>
        <dbReference type="UniProtKB" id="P43286"/>
    </source>
</evidence>
<evidence type="ECO:0000250" key="3">
    <source>
        <dbReference type="UniProtKB" id="P61837"/>
    </source>
</evidence>
<evidence type="ECO:0000255" key="4"/>
<evidence type="ECO:0000305" key="5"/>
<feature type="chain" id="PRO_0000064017" description="Probable aquaporin TIP5-1">
    <location>
        <begin position="1"/>
        <end position="256"/>
    </location>
</feature>
<feature type="transmembrane region" description="Helical; Name=1" evidence="4">
    <location>
        <begin position="24"/>
        <end position="44"/>
    </location>
</feature>
<feature type="transmembrane region" description="Helical; Name=2" evidence="4">
    <location>
        <begin position="57"/>
        <end position="77"/>
    </location>
</feature>
<feature type="transmembrane region" description="Helical; Name=3" evidence="4">
    <location>
        <begin position="89"/>
        <end position="109"/>
    </location>
</feature>
<feature type="transmembrane region" description="Helical; Name=4" evidence="4">
    <location>
        <begin position="144"/>
        <end position="164"/>
    </location>
</feature>
<feature type="transmembrane region" description="Helical; Name=5" evidence="4">
    <location>
        <begin position="171"/>
        <end position="191"/>
    </location>
</feature>
<feature type="transmembrane region" description="Helical; Name=6" evidence="4">
    <location>
        <begin position="222"/>
        <end position="242"/>
    </location>
</feature>
<feature type="short sequence motif" description="NPA 1">
    <location>
        <begin position="87"/>
        <end position="89"/>
    </location>
</feature>
<feature type="short sequence motif" description="NPA 2">
    <location>
        <begin position="200"/>
        <end position="202"/>
    </location>
</feature>
<feature type="modified residue" description="N-acetylmethionine" evidence="3">
    <location>
        <position position="1"/>
    </location>
</feature>
<feature type="modified residue" description="Phosphoserine" evidence="2">
    <location>
        <position position="249"/>
    </location>
</feature>
<feature type="sequence conflict" description="In Ref. 3; BX826124." evidence="5" ref="3">
    <original>N</original>
    <variation>T</variation>
    <location>
        <position position="237"/>
    </location>
</feature>
<reference key="1">
    <citation type="journal article" date="2000" name="Nature">
        <title>Sequence and analysis of chromosome 3 of the plant Arabidopsis thaliana.</title>
        <authorList>
            <person name="Salanoubat M."/>
            <person name="Lemcke K."/>
            <person name="Rieger M."/>
            <person name="Ansorge W."/>
            <person name="Unseld M."/>
            <person name="Fartmann B."/>
            <person name="Valle G."/>
            <person name="Bloecker H."/>
            <person name="Perez-Alonso M."/>
            <person name="Obermaier B."/>
            <person name="Delseny M."/>
            <person name="Boutry M."/>
            <person name="Grivell L.A."/>
            <person name="Mache R."/>
            <person name="Puigdomenech P."/>
            <person name="De Simone V."/>
            <person name="Choisne N."/>
            <person name="Artiguenave F."/>
            <person name="Robert C."/>
            <person name="Brottier P."/>
            <person name="Wincker P."/>
            <person name="Cattolico L."/>
            <person name="Weissenbach J."/>
            <person name="Saurin W."/>
            <person name="Quetier F."/>
            <person name="Schaefer M."/>
            <person name="Mueller-Auer S."/>
            <person name="Gabel C."/>
            <person name="Fuchs M."/>
            <person name="Benes V."/>
            <person name="Wurmbach E."/>
            <person name="Drzonek H."/>
            <person name="Erfle H."/>
            <person name="Jordan N."/>
            <person name="Bangert S."/>
            <person name="Wiedelmann R."/>
            <person name="Kranz H."/>
            <person name="Voss H."/>
            <person name="Holland R."/>
            <person name="Brandt P."/>
            <person name="Nyakatura G."/>
            <person name="Vezzi A."/>
            <person name="D'Angelo M."/>
            <person name="Pallavicini A."/>
            <person name="Toppo S."/>
            <person name="Simionati B."/>
            <person name="Conrad A."/>
            <person name="Hornischer K."/>
            <person name="Kauer G."/>
            <person name="Loehnert T.-H."/>
            <person name="Nordsiek G."/>
            <person name="Reichelt J."/>
            <person name="Scharfe M."/>
            <person name="Schoen O."/>
            <person name="Bargues M."/>
            <person name="Terol J."/>
            <person name="Climent J."/>
            <person name="Navarro P."/>
            <person name="Collado C."/>
            <person name="Perez-Perez A."/>
            <person name="Ottenwaelder B."/>
            <person name="Duchemin D."/>
            <person name="Cooke R."/>
            <person name="Laudie M."/>
            <person name="Berger-Llauro C."/>
            <person name="Purnelle B."/>
            <person name="Masuy D."/>
            <person name="de Haan M."/>
            <person name="Maarse A.C."/>
            <person name="Alcaraz J.-P."/>
            <person name="Cottet A."/>
            <person name="Casacuberta E."/>
            <person name="Monfort A."/>
            <person name="Argiriou A."/>
            <person name="Flores M."/>
            <person name="Liguori R."/>
            <person name="Vitale D."/>
            <person name="Mannhaupt G."/>
            <person name="Haase D."/>
            <person name="Schoof H."/>
            <person name="Rudd S."/>
            <person name="Zaccaria P."/>
            <person name="Mewes H.-W."/>
            <person name="Mayer K.F.X."/>
            <person name="Kaul S."/>
            <person name="Town C.D."/>
            <person name="Koo H.L."/>
            <person name="Tallon L.J."/>
            <person name="Jenkins J."/>
            <person name="Rooney T."/>
            <person name="Rizzo M."/>
            <person name="Walts A."/>
            <person name="Utterback T."/>
            <person name="Fujii C.Y."/>
            <person name="Shea T.P."/>
            <person name="Creasy T.H."/>
            <person name="Haas B."/>
            <person name="Maiti R."/>
            <person name="Wu D."/>
            <person name="Peterson J."/>
            <person name="Van Aken S."/>
            <person name="Pai G."/>
            <person name="Militscher J."/>
            <person name="Sellers P."/>
            <person name="Gill J.E."/>
            <person name="Feldblyum T.V."/>
            <person name="Preuss D."/>
            <person name="Lin X."/>
            <person name="Nierman W.C."/>
            <person name="Salzberg S.L."/>
            <person name="White O."/>
            <person name="Venter J.C."/>
            <person name="Fraser C.M."/>
            <person name="Kaneko T."/>
            <person name="Nakamura Y."/>
            <person name="Sato S."/>
            <person name="Kato T."/>
            <person name="Asamizu E."/>
            <person name="Sasamoto S."/>
            <person name="Kimura T."/>
            <person name="Idesawa K."/>
            <person name="Kawashima K."/>
            <person name="Kishida Y."/>
            <person name="Kiyokawa C."/>
            <person name="Kohara M."/>
            <person name="Matsumoto M."/>
            <person name="Matsuno A."/>
            <person name="Muraki A."/>
            <person name="Nakayama S."/>
            <person name="Nakazaki N."/>
            <person name="Shinpo S."/>
            <person name="Takeuchi C."/>
            <person name="Wada T."/>
            <person name="Watanabe A."/>
            <person name="Yamada M."/>
            <person name="Yasuda M."/>
            <person name="Tabata S."/>
        </authorList>
    </citation>
    <scope>NUCLEOTIDE SEQUENCE [LARGE SCALE GENOMIC DNA]</scope>
    <source>
        <strain>cv. Columbia</strain>
    </source>
</reference>
<reference key="2">
    <citation type="journal article" date="2017" name="Plant J.">
        <title>Araport11: a complete reannotation of the Arabidopsis thaliana reference genome.</title>
        <authorList>
            <person name="Cheng C.Y."/>
            <person name="Krishnakumar V."/>
            <person name="Chan A.P."/>
            <person name="Thibaud-Nissen F."/>
            <person name="Schobel S."/>
            <person name="Town C.D."/>
        </authorList>
    </citation>
    <scope>GENOME REANNOTATION</scope>
    <source>
        <strain>cv. Columbia</strain>
    </source>
</reference>
<reference key="3">
    <citation type="journal article" date="2004" name="Genome Res.">
        <title>Whole genome sequence comparisons and 'full-length' cDNA sequences: a combined approach to evaluate and improve Arabidopsis genome annotation.</title>
        <authorList>
            <person name="Castelli V."/>
            <person name="Aury J.-M."/>
            <person name="Jaillon O."/>
            <person name="Wincker P."/>
            <person name="Clepet C."/>
            <person name="Menard M."/>
            <person name="Cruaud C."/>
            <person name="Quetier F."/>
            <person name="Scarpelli C."/>
            <person name="Schaechter V."/>
            <person name="Temple G."/>
            <person name="Caboche M."/>
            <person name="Weissenbach J."/>
            <person name="Salanoubat M."/>
        </authorList>
    </citation>
    <scope>NUCLEOTIDE SEQUENCE [LARGE SCALE MRNA]</scope>
    <source>
        <strain>cv. Columbia</strain>
    </source>
</reference>
<reference key="4">
    <citation type="journal article" date="2002" name="Genome Biol.">
        <title>From genome to function: the Arabidopsis aquaporins.</title>
        <authorList>
            <person name="Quigley F."/>
            <person name="Rosenberg J.M."/>
            <person name="Shachar-Hill Y."/>
            <person name="Bohnert H.J."/>
        </authorList>
    </citation>
    <scope>NOMENCLATURE</scope>
</reference>
<gene>
    <name type="primary">TIP5-1</name>
    <name type="ordered locus">At3g47440</name>
    <name type="ORF">T21L8.190</name>
</gene>
<sequence>MRRMIPTSFSSKFQGVLSMNALRCYVSEFISTFFFVLAAVGSVMSSRKLMAGDVSGPFGVLIPAIANALALSSSVYISWNVSGGHVNPAVTFAMAVAGRISVPTAMFYWTSQMIASVMACLVLKVTVMEQHVPIYKIAGEMTGFGASVLEGVLAFVLVYTVFTASDPRRGLPLAVGPIFIGFVAGANVLAAGPFSGGSMNPACAFGSAMVYGSFKNQAVYWVGPLLGGATAALVYDNVVVPVEDDRGSSTGDAIGV</sequence>
<organism>
    <name type="scientific">Arabidopsis thaliana</name>
    <name type="common">Mouse-ear cress</name>
    <dbReference type="NCBI Taxonomy" id="3702"/>
    <lineage>
        <taxon>Eukaryota</taxon>
        <taxon>Viridiplantae</taxon>
        <taxon>Streptophyta</taxon>
        <taxon>Embryophyta</taxon>
        <taxon>Tracheophyta</taxon>
        <taxon>Spermatophyta</taxon>
        <taxon>Magnoliopsida</taxon>
        <taxon>eudicotyledons</taxon>
        <taxon>Gunneridae</taxon>
        <taxon>Pentapetalae</taxon>
        <taxon>rosids</taxon>
        <taxon>malvids</taxon>
        <taxon>Brassicales</taxon>
        <taxon>Brassicaceae</taxon>
        <taxon>Camelineae</taxon>
        <taxon>Arabidopsis</taxon>
    </lineage>
</organism>
<keyword id="KW-0007">Acetylation</keyword>
<keyword id="KW-0472">Membrane</keyword>
<keyword id="KW-0597">Phosphoprotein</keyword>
<keyword id="KW-1185">Reference proteome</keyword>
<keyword id="KW-0677">Repeat</keyword>
<keyword id="KW-0812">Transmembrane</keyword>
<keyword id="KW-1133">Transmembrane helix</keyword>
<keyword id="KW-0813">Transport</keyword>
<name>TIP51_ARATH</name>
<comment type="function">
    <text evidence="1">Potential aquaporin, which may facilitate the transport of water and small neutral solutes across cell membranes.</text>
</comment>
<comment type="subcellular location">
    <subcellularLocation>
        <location evidence="5">Membrane</location>
        <topology evidence="5">Multi-pass membrane protein</topology>
    </subcellularLocation>
</comment>
<comment type="domain">
    <text>Aquaporins contain two tandem repeats each containing three membrane-spanning domains and a pore-forming loop with the signature motif Asn-Pro-Ala (NPA).</text>
</comment>
<comment type="similarity">
    <text evidence="5">Belongs to the MIP/aquaporin (TC 1.A.8) family. TIP (TC 1.A.8.10) subfamily.</text>
</comment>
<accession>Q9STX9</accession>
<proteinExistence type="evidence at transcript level"/>
<protein>
    <recommendedName>
        <fullName>Probable aquaporin TIP5-1</fullName>
    </recommendedName>
    <alternativeName>
        <fullName>Tonoplast intrinsic protein 5-1</fullName>
        <shortName>AtTIP5;1</shortName>
    </alternativeName>
</protein>